<proteinExistence type="inferred from homology"/>
<evidence type="ECO:0000255" key="1">
    <source>
        <dbReference type="HAMAP-Rule" id="MF_01317"/>
    </source>
</evidence>
<protein>
    <recommendedName>
        <fullName evidence="1">Photosystem II reaction center protein L</fullName>
        <shortName evidence="1">PSII-L</shortName>
    </recommendedName>
</protein>
<organism>
    <name type="scientific">Synechococcus sp. (strain CC9311)</name>
    <dbReference type="NCBI Taxonomy" id="64471"/>
    <lineage>
        <taxon>Bacteria</taxon>
        <taxon>Bacillati</taxon>
        <taxon>Cyanobacteriota</taxon>
        <taxon>Cyanophyceae</taxon>
        <taxon>Synechococcales</taxon>
        <taxon>Synechococcaceae</taxon>
        <taxon>Synechococcus</taxon>
    </lineage>
</organism>
<keyword id="KW-0472">Membrane</keyword>
<keyword id="KW-0602">Photosynthesis</keyword>
<keyword id="KW-0604">Photosystem II</keyword>
<keyword id="KW-0674">Reaction center</keyword>
<keyword id="KW-1185">Reference proteome</keyword>
<keyword id="KW-0793">Thylakoid</keyword>
<keyword id="KW-0812">Transmembrane</keyword>
<keyword id="KW-1133">Transmembrane helix</keyword>
<gene>
    <name evidence="1" type="primary">psbL</name>
    <name type="ordered locus">sync_0237</name>
</gene>
<accession>Q0IDJ9</accession>
<reference key="1">
    <citation type="journal article" date="2006" name="Proc. Natl. Acad. Sci. U.S.A.">
        <title>Genome sequence of Synechococcus CC9311: insights into adaptation to a coastal environment.</title>
        <authorList>
            <person name="Palenik B."/>
            <person name="Ren Q."/>
            <person name="Dupont C.L."/>
            <person name="Myers G.S."/>
            <person name="Heidelberg J.F."/>
            <person name="Badger J.H."/>
            <person name="Madupu R."/>
            <person name="Nelson W.C."/>
            <person name="Brinkac L.M."/>
            <person name="Dodson R.J."/>
            <person name="Durkin A.S."/>
            <person name="Daugherty S.C."/>
            <person name="Sullivan S.A."/>
            <person name="Khouri H."/>
            <person name="Mohamoud Y."/>
            <person name="Halpin R."/>
            <person name="Paulsen I.T."/>
        </authorList>
    </citation>
    <scope>NUCLEOTIDE SEQUENCE [LARGE SCALE GENOMIC DNA]</scope>
    <source>
        <strain>CC9311</strain>
    </source>
</reference>
<name>PSBL_SYNS3</name>
<feature type="chain" id="PRO_0000306211" description="Photosystem II reaction center protein L">
    <location>
        <begin position="1"/>
        <end position="39"/>
    </location>
</feature>
<feature type="transmembrane region" description="Helical" evidence="1">
    <location>
        <begin position="18"/>
        <end position="38"/>
    </location>
</feature>
<comment type="function">
    <text evidence="1">One of the components of the core complex of photosystem II (PSII). PSII is a light-driven water:plastoquinone oxidoreductase that uses light energy to abstract electrons from H(2)O, generating O(2) and a proton gradient subsequently used for ATP formation. It consists of a core antenna complex that captures photons, and an electron transfer chain that converts photonic excitation into a charge separation. This subunit is found at the monomer-monomer interface and is required for correct PSII assembly and/or dimerization.</text>
</comment>
<comment type="subunit">
    <text evidence="1">PSII is composed of 1 copy each of membrane proteins PsbA, PsbB, PsbC, PsbD, PsbE, PsbF, PsbH, PsbI, PsbJ, PsbK, PsbL, PsbM, PsbT, PsbX, PsbY, PsbZ, Psb30/Ycf12, peripheral proteins PsbO, CyanoQ (PsbQ), PsbU, PsbV and a large number of cofactors. It forms dimeric complexes.</text>
</comment>
<comment type="subcellular location">
    <subcellularLocation>
        <location evidence="1">Cellular thylakoid membrane</location>
        <topology evidence="1">Single-pass membrane protein</topology>
    </subcellularLocation>
</comment>
<comment type="similarity">
    <text evidence="1">Belongs to the PsbL family.</text>
</comment>
<dbReference type="EMBL" id="CP000435">
    <property type="protein sequence ID" value="ABI47307.1"/>
    <property type="molecule type" value="Genomic_DNA"/>
</dbReference>
<dbReference type="RefSeq" id="WP_006853746.1">
    <property type="nucleotide sequence ID" value="NC_008319.1"/>
</dbReference>
<dbReference type="SMR" id="Q0IDJ9"/>
<dbReference type="STRING" id="64471.sync_0237"/>
<dbReference type="KEGG" id="syg:sync_0237"/>
<dbReference type="eggNOG" id="ENOG5033AKP">
    <property type="taxonomic scope" value="Bacteria"/>
</dbReference>
<dbReference type="HOGENOM" id="CLU_214425_0_0_3"/>
<dbReference type="Proteomes" id="UP000001961">
    <property type="component" value="Chromosome"/>
</dbReference>
<dbReference type="GO" id="GO:0009539">
    <property type="term" value="C:photosystem II reaction center"/>
    <property type="evidence" value="ECO:0007669"/>
    <property type="project" value="InterPro"/>
</dbReference>
<dbReference type="GO" id="GO:0031676">
    <property type="term" value="C:plasma membrane-derived thylakoid membrane"/>
    <property type="evidence" value="ECO:0007669"/>
    <property type="project" value="UniProtKB-SubCell"/>
</dbReference>
<dbReference type="GO" id="GO:0015979">
    <property type="term" value="P:photosynthesis"/>
    <property type="evidence" value="ECO:0007669"/>
    <property type="project" value="UniProtKB-UniRule"/>
</dbReference>
<dbReference type="HAMAP" id="MF_01317">
    <property type="entry name" value="PSII_PsbL"/>
    <property type="match status" value="1"/>
</dbReference>
<dbReference type="InterPro" id="IPR003372">
    <property type="entry name" value="PSII_PsbL"/>
</dbReference>
<dbReference type="InterPro" id="IPR037266">
    <property type="entry name" value="PSII_PsbL_sf"/>
</dbReference>
<dbReference type="NCBIfam" id="NF001972">
    <property type="entry name" value="PRK00753.1"/>
    <property type="match status" value="1"/>
</dbReference>
<dbReference type="Pfam" id="PF02419">
    <property type="entry name" value="PsbL"/>
    <property type="match status" value="1"/>
</dbReference>
<dbReference type="SUPFAM" id="SSF161017">
    <property type="entry name" value="Photosystem II reaction center protein L, PsbL"/>
    <property type="match status" value="1"/>
</dbReference>
<sequence length="39" mass="4506">MERNPNPNNLPVELNRTSLYLGLLIVFTTGILFSSYFFN</sequence>